<feature type="chain" id="PRO_0000306202" description="Photosystem II reaction center protein L">
    <location>
        <begin position="1"/>
        <end position="37"/>
    </location>
</feature>
<feature type="transmembrane region" description="Helical" evidence="2">
    <location>
        <begin position="16"/>
        <end position="36"/>
    </location>
</feature>
<proteinExistence type="inferred from homology"/>
<reference key="1">
    <citation type="journal article" date="2003" name="DNA Res.">
        <title>Complete genome structure of Gloeobacter violaceus PCC 7421, a cyanobacterium that lacks thylakoids.</title>
        <authorList>
            <person name="Nakamura Y."/>
            <person name="Kaneko T."/>
            <person name="Sato S."/>
            <person name="Mimuro M."/>
            <person name="Miyashita H."/>
            <person name="Tsuchiya T."/>
            <person name="Sasamoto S."/>
            <person name="Watanabe A."/>
            <person name="Kawashima K."/>
            <person name="Kishida Y."/>
            <person name="Kiyokawa C."/>
            <person name="Kohara M."/>
            <person name="Matsumoto M."/>
            <person name="Matsuno A."/>
            <person name="Nakazaki N."/>
            <person name="Shimpo S."/>
            <person name="Takeuchi C."/>
            <person name="Yamada M."/>
            <person name="Tabata S."/>
        </authorList>
    </citation>
    <scope>NUCLEOTIDE SEQUENCE [LARGE SCALE GENOMIC DNA]</scope>
    <source>
        <strain>ATCC 29082 / PCC 7421</strain>
    </source>
</reference>
<dbReference type="EMBL" id="BA000045">
    <property type="protein sequence ID" value="BAC88799.1"/>
    <property type="molecule type" value="Genomic_DNA"/>
</dbReference>
<dbReference type="RefSeq" id="NP_923804.1">
    <property type="nucleotide sequence ID" value="NC_005125.1"/>
</dbReference>
<dbReference type="RefSeq" id="WP_011140860.1">
    <property type="nucleotide sequence ID" value="NC_005125.1"/>
</dbReference>
<dbReference type="SMR" id="Q7NMA8"/>
<dbReference type="STRING" id="251221.gene:10758336"/>
<dbReference type="EnsemblBacteria" id="BAC88799">
    <property type="protein sequence ID" value="BAC88799"/>
    <property type="gene ID" value="BAC88799"/>
</dbReference>
<dbReference type="KEGG" id="gvi:gsr0858"/>
<dbReference type="HOGENOM" id="CLU_214425_0_0_3"/>
<dbReference type="InParanoid" id="Q7NMA8"/>
<dbReference type="Proteomes" id="UP000000557">
    <property type="component" value="Chromosome"/>
</dbReference>
<dbReference type="GO" id="GO:0005737">
    <property type="term" value="C:cytoplasm"/>
    <property type="evidence" value="ECO:0007669"/>
    <property type="project" value="UniProtKB-ARBA"/>
</dbReference>
<dbReference type="GO" id="GO:0009539">
    <property type="term" value="C:photosystem II reaction center"/>
    <property type="evidence" value="ECO:0007669"/>
    <property type="project" value="InterPro"/>
</dbReference>
<dbReference type="GO" id="GO:0005886">
    <property type="term" value="C:plasma membrane"/>
    <property type="evidence" value="ECO:0007669"/>
    <property type="project" value="UniProtKB-SubCell"/>
</dbReference>
<dbReference type="GO" id="GO:0015979">
    <property type="term" value="P:photosynthesis"/>
    <property type="evidence" value="ECO:0007669"/>
    <property type="project" value="UniProtKB-KW"/>
</dbReference>
<dbReference type="InterPro" id="IPR003372">
    <property type="entry name" value="PSII_PsbL"/>
</dbReference>
<dbReference type="InterPro" id="IPR037266">
    <property type="entry name" value="PSII_PsbL_sf"/>
</dbReference>
<dbReference type="Pfam" id="PF02419">
    <property type="entry name" value="PsbL"/>
    <property type="match status" value="1"/>
</dbReference>
<dbReference type="SUPFAM" id="SSF161017">
    <property type="entry name" value="Photosystem II reaction center protein L, PsbL"/>
    <property type="match status" value="1"/>
</dbReference>
<name>PSBL_GLOVI</name>
<accession>Q7NMA8</accession>
<organism>
    <name type="scientific">Gloeobacter violaceus (strain ATCC 29082 / PCC 7421)</name>
    <dbReference type="NCBI Taxonomy" id="251221"/>
    <lineage>
        <taxon>Bacteria</taxon>
        <taxon>Bacillati</taxon>
        <taxon>Cyanobacteriota</taxon>
        <taxon>Cyanophyceae</taxon>
        <taxon>Gloeobacterales</taxon>
        <taxon>Gloeobacteraceae</taxon>
        <taxon>Gloeobacter</taxon>
    </lineage>
</organism>
<sequence>MSKDPKNPGVELNRTSLYMGLVLVLVIILLFSNYFIN</sequence>
<protein>
    <recommendedName>
        <fullName>Photosystem II reaction center protein L</fullName>
        <shortName>PSII-L</shortName>
    </recommendedName>
</protein>
<evidence type="ECO:0000250" key="1">
    <source>
        <dbReference type="UniProtKB" id="Q8DIN8"/>
    </source>
</evidence>
<evidence type="ECO:0000255" key="2"/>
<evidence type="ECO:0000305" key="3"/>
<evidence type="ECO:0000305" key="4">
    <source>
    </source>
</evidence>
<comment type="function">
    <text evidence="1">One of the components of the core complex of photosystem II (PSII). PSII is a light-driven water:plastoquinone oxidoreductase that uses light energy to abstract electrons from H(2)O, generating O(2) and a proton gradient subsequently used for ATP formation. It consists of a core antenna complex that captures photons, and an electron transfer chain that converts photonic excitation into a charge separation. This subunit is found at the monomer-monomer interface and is required for correct PSII assembly and/or dimerization.</text>
</comment>
<comment type="subunit">
    <text evidence="4">PSII is composed of 1 copy each of membrane proteins PsbA, PsbB, PsbC, PsbD, PsbE, PsbF, PsbH, PsbI, PsbJ, PsbK, PsbL, PsbM, PsbT, PsbX, Psb30/Ycf12, peripheral proteins PsbO, CyanoQ (PsbQ), PsbU, PsbV and a large number of cofactors. It forms dimeric complexes.</text>
</comment>
<comment type="subcellular location">
    <subcellularLocation>
        <location evidence="3">Cell inner membrane</location>
        <topology evidence="1">Single-pass membrane protein</topology>
    </subcellularLocation>
</comment>
<comment type="similarity">
    <text evidence="3">Belongs to the PsbL family.</text>
</comment>
<gene>
    <name type="primary">psbL</name>
    <name type="ordered locus">gsr0858</name>
</gene>
<keyword id="KW-0997">Cell inner membrane</keyword>
<keyword id="KW-1003">Cell membrane</keyword>
<keyword id="KW-0472">Membrane</keyword>
<keyword id="KW-0602">Photosynthesis</keyword>
<keyword id="KW-0604">Photosystem II</keyword>
<keyword id="KW-0674">Reaction center</keyword>
<keyword id="KW-1185">Reference proteome</keyword>
<keyword id="KW-0812">Transmembrane</keyword>
<keyword id="KW-1133">Transmembrane helix</keyword>